<name>MPAA5_AMBEL</name>
<keyword id="KW-0020">Allergen</keyword>
<keyword id="KW-0903">Direct protein sequencing</keyword>
<keyword id="KW-1015">Disulfide bond</keyword>
<feature type="chain" id="PRO_0000096552" description="Pollen allergen Amb a 5">
    <location>
        <begin position="1"/>
        <end position="45"/>
    </location>
</feature>
<feature type="disulfide bond">
    <location>
        <begin position="4"/>
        <end position="39"/>
    </location>
</feature>
<feature type="disulfide bond">
    <location>
        <begin position="11"/>
        <end position="26"/>
    </location>
</feature>
<feature type="disulfide bond">
    <location>
        <begin position="18"/>
        <end position="32"/>
    </location>
</feature>
<feature type="disulfide bond">
    <location>
        <begin position="19"/>
        <end position="43"/>
    </location>
</feature>
<feature type="sequence variant" description="In 33% of the molecules.">
    <original>V</original>
    <variation>L</variation>
    <location>
        <position position="2"/>
    </location>
</feature>
<proteinExistence type="evidence at protein level"/>
<reference key="1">
    <citation type="journal article" date="1975" name="Biochemistry">
        <title>The amino acid sequence of ragweed pollen allergen Ra5.</title>
        <authorList>
            <person name="Mole L.E."/>
            <person name="Goodfriend L."/>
            <person name="Lapkoff C.B."/>
            <person name="Kehoe J.M."/>
            <person name="Capra J.D."/>
        </authorList>
    </citation>
    <scope>PROTEIN SEQUENCE</scope>
    <source>
        <tissue>Pollen</tissue>
    </source>
</reference>
<reference key="2">
    <citation type="journal article" date="1992" name="Biochemistry">
        <title>Proton resonance assignments and three-dimensional solution structure of the ragweed allergen Amb a V by nuclear magnetic resonance spectroscopy.</title>
        <authorList>
            <person name="Metzler W.J."/>
            <person name="Valentine K."/>
            <person name="Roebber M."/>
            <person name="Marsh D.G."/>
            <person name="Mueller L."/>
        </authorList>
    </citation>
    <scope>STRUCTURE BY NMR</scope>
</reference>
<dbReference type="PIR" id="A03371">
    <property type="entry name" value="ARRA5"/>
</dbReference>
<dbReference type="SMR" id="P02878"/>
<dbReference type="Allergome" id="28">
    <property type="allergen name" value="Amb a 5"/>
</dbReference>
<dbReference type="Allergome" id="3069">
    <property type="allergen name" value="Amb a 5.0101"/>
</dbReference>
<dbReference type="Gene3D" id="3.30.160.80">
    <property type="entry name" value="Amb V Allergen"/>
    <property type="match status" value="1"/>
</dbReference>
<dbReference type="InterPro" id="IPR005611">
    <property type="entry name" value="Amb_V_allergen"/>
</dbReference>
<dbReference type="InterPro" id="IPR036712">
    <property type="entry name" value="Amb_V_allergen_sf"/>
</dbReference>
<dbReference type="Pfam" id="PF03913">
    <property type="entry name" value="Ragweed_pollen"/>
    <property type="match status" value="1"/>
</dbReference>
<dbReference type="PIRSF" id="PIRSF002697">
    <property type="entry name" value="Amb_V_allergen"/>
    <property type="match status" value="1"/>
</dbReference>
<dbReference type="SMART" id="SM00816">
    <property type="entry name" value="Amb_V_allergen"/>
    <property type="match status" value="1"/>
</dbReference>
<dbReference type="SUPFAM" id="SSF57296">
    <property type="entry name" value="Amb V allergen"/>
    <property type="match status" value="1"/>
</dbReference>
<protein>
    <recommendedName>
        <fullName>Pollen allergen Amb a 5</fullName>
    </recommendedName>
    <alternativeName>
        <fullName>Allergen Amb a V</fullName>
    </alternativeName>
    <alternativeName>
        <fullName>Allergen Ra5</fullName>
    </alternativeName>
    <allergenName>Amb a 5</allergenName>
</protein>
<comment type="subunit">
    <text>Monomer.</text>
</comment>
<comment type="allergen">
    <text>Causes an allergic reaction in human.</text>
</comment>
<accession>P02878</accession>
<sequence length="45" mass="4979">LVPCAWAGNVCGEKRAYCCSDPGRYCPWQVVCYESSEICSKKCGK</sequence>
<organism>
    <name type="scientific">Ambrosia artemisiifolia var. elatior</name>
    <name type="common">Short ragweed</name>
    <name type="synonym">Ambrosia elatior</name>
    <dbReference type="NCBI Taxonomy" id="4215"/>
    <lineage>
        <taxon>Eukaryota</taxon>
        <taxon>Viridiplantae</taxon>
        <taxon>Streptophyta</taxon>
        <taxon>Embryophyta</taxon>
        <taxon>Tracheophyta</taxon>
        <taxon>Spermatophyta</taxon>
        <taxon>Magnoliopsida</taxon>
        <taxon>eudicotyledons</taxon>
        <taxon>Gunneridae</taxon>
        <taxon>Pentapetalae</taxon>
        <taxon>asterids</taxon>
        <taxon>campanulids</taxon>
        <taxon>Asterales</taxon>
        <taxon>Asteraceae</taxon>
        <taxon>Asteroideae</taxon>
        <taxon>Heliantheae alliance</taxon>
        <taxon>Heliantheae</taxon>
        <taxon>Ambrosia</taxon>
    </lineage>
</organism>